<name>LPXA_FUSNN</name>
<comment type="function">
    <text evidence="1">Involved in the biosynthesis of lipid A, a phosphorylated glycolipid that anchors the lipopolysaccharide to the outer membrane of the cell.</text>
</comment>
<comment type="catalytic activity">
    <reaction evidence="1">
        <text>a (3R)-hydroxyacyl-[ACP] + UDP-N-acetyl-alpha-D-glucosamine = a UDP-3-O-[(3R)-3-hydroxyacyl]-N-acetyl-alpha-D-glucosamine + holo-[ACP]</text>
        <dbReference type="Rhea" id="RHEA:67812"/>
        <dbReference type="Rhea" id="RHEA-COMP:9685"/>
        <dbReference type="Rhea" id="RHEA-COMP:9945"/>
        <dbReference type="ChEBI" id="CHEBI:57705"/>
        <dbReference type="ChEBI" id="CHEBI:64479"/>
        <dbReference type="ChEBI" id="CHEBI:78827"/>
        <dbReference type="ChEBI" id="CHEBI:173225"/>
        <dbReference type="EC" id="2.3.1.129"/>
    </reaction>
</comment>
<comment type="pathway">
    <text evidence="1">Glycolipid biosynthesis; lipid IV(A) biosynthesis; lipid IV(A) from (3R)-3-hydroxytetradecanoyl-[acyl-carrier-protein] and UDP-N-acetyl-alpha-D-glucosamine: step 1/6.</text>
</comment>
<comment type="subunit">
    <text evidence="1">Homotrimer.</text>
</comment>
<comment type="subcellular location">
    <subcellularLocation>
        <location evidence="1">Cytoplasm</location>
    </subcellularLocation>
</comment>
<comment type="similarity">
    <text evidence="1">Belongs to the transferase hexapeptide repeat family. LpxA subfamily.</text>
</comment>
<accession>Q8RFU2</accession>
<evidence type="ECO:0000255" key="1">
    <source>
        <dbReference type="HAMAP-Rule" id="MF_00387"/>
    </source>
</evidence>
<proteinExistence type="inferred from homology"/>
<keyword id="KW-0012">Acyltransferase</keyword>
<keyword id="KW-0963">Cytoplasm</keyword>
<keyword id="KW-0441">Lipid A biosynthesis</keyword>
<keyword id="KW-0444">Lipid biosynthesis</keyword>
<keyword id="KW-0443">Lipid metabolism</keyword>
<keyword id="KW-1185">Reference proteome</keyword>
<keyword id="KW-0677">Repeat</keyword>
<keyword id="KW-0808">Transferase</keyword>
<dbReference type="EC" id="2.3.1.129" evidence="1"/>
<dbReference type="EMBL" id="AE009951">
    <property type="protein sequence ID" value="AAL94791.1"/>
    <property type="molecule type" value="Genomic_DNA"/>
</dbReference>
<dbReference type="RefSeq" id="NP_603492.1">
    <property type="nucleotide sequence ID" value="NC_003454.1"/>
</dbReference>
<dbReference type="RefSeq" id="WP_011016510.1">
    <property type="nucleotide sequence ID" value="NZ_OZ209243.1"/>
</dbReference>
<dbReference type="SMR" id="Q8RFU2"/>
<dbReference type="STRING" id="190304.FN0595"/>
<dbReference type="PaxDb" id="190304-FN0595"/>
<dbReference type="EnsemblBacteria" id="AAL94791">
    <property type="protein sequence ID" value="AAL94791"/>
    <property type="gene ID" value="FN0595"/>
</dbReference>
<dbReference type="GeneID" id="79783594"/>
<dbReference type="KEGG" id="fnu:FN0595"/>
<dbReference type="PATRIC" id="fig|190304.8.peg.1160"/>
<dbReference type="eggNOG" id="COG1043">
    <property type="taxonomic scope" value="Bacteria"/>
</dbReference>
<dbReference type="HOGENOM" id="CLU_061249_0_0_0"/>
<dbReference type="InParanoid" id="Q8RFU2"/>
<dbReference type="BioCyc" id="FNUC190304:G1FZS-1182-MONOMER"/>
<dbReference type="UniPathway" id="UPA00359">
    <property type="reaction ID" value="UER00477"/>
</dbReference>
<dbReference type="Proteomes" id="UP000002521">
    <property type="component" value="Chromosome"/>
</dbReference>
<dbReference type="GO" id="GO:0005737">
    <property type="term" value="C:cytoplasm"/>
    <property type="evidence" value="ECO:0007669"/>
    <property type="project" value="UniProtKB-SubCell"/>
</dbReference>
<dbReference type="GO" id="GO:0016020">
    <property type="term" value="C:membrane"/>
    <property type="evidence" value="ECO:0007669"/>
    <property type="project" value="GOC"/>
</dbReference>
<dbReference type="GO" id="GO:0008780">
    <property type="term" value="F:acyl-[acyl-carrier-protein]-UDP-N-acetylglucosamine O-acyltransferase activity"/>
    <property type="evidence" value="ECO:0007669"/>
    <property type="project" value="UniProtKB-UniRule"/>
</dbReference>
<dbReference type="GO" id="GO:0009245">
    <property type="term" value="P:lipid A biosynthetic process"/>
    <property type="evidence" value="ECO:0007669"/>
    <property type="project" value="UniProtKB-UniRule"/>
</dbReference>
<dbReference type="CDD" id="cd03351">
    <property type="entry name" value="LbH_UDP-GlcNAc_AT"/>
    <property type="match status" value="1"/>
</dbReference>
<dbReference type="Gene3D" id="2.160.10.10">
    <property type="entry name" value="Hexapeptide repeat proteins"/>
    <property type="match status" value="1"/>
</dbReference>
<dbReference type="Gene3D" id="1.20.1180.10">
    <property type="entry name" value="Udp N-acetylglucosamine O-acyltransferase, C-terminal domain"/>
    <property type="match status" value="1"/>
</dbReference>
<dbReference type="HAMAP" id="MF_00387">
    <property type="entry name" value="LpxA"/>
    <property type="match status" value="1"/>
</dbReference>
<dbReference type="InterPro" id="IPR029098">
    <property type="entry name" value="Acetyltransf_C"/>
</dbReference>
<dbReference type="InterPro" id="IPR037157">
    <property type="entry name" value="Acetyltransf_C_sf"/>
</dbReference>
<dbReference type="InterPro" id="IPR001451">
    <property type="entry name" value="Hexapep"/>
</dbReference>
<dbReference type="InterPro" id="IPR010137">
    <property type="entry name" value="Lipid_A_LpxA"/>
</dbReference>
<dbReference type="InterPro" id="IPR011004">
    <property type="entry name" value="Trimer_LpxA-like_sf"/>
</dbReference>
<dbReference type="NCBIfam" id="TIGR01852">
    <property type="entry name" value="lipid_A_lpxA"/>
    <property type="match status" value="1"/>
</dbReference>
<dbReference type="NCBIfam" id="NF003657">
    <property type="entry name" value="PRK05289.1"/>
    <property type="match status" value="1"/>
</dbReference>
<dbReference type="PANTHER" id="PTHR43480">
    <property type="entry name" value="ACYL-[ACYL-CARRIER-PROTEIN]--UDP-N-ACETYLGLUCOSAMINE O-ACYLTRANSFERASE"/>
    <property type="match status" value="1"/>
</dbReference>
<dbReference type="PANTHER" id="PTHR43480:SF1">
    <property type="entry name" value="ACYL-[ACYL-CARRIER-PROTEIN]--UDP-N-ACETYLGLUCOSAMINE O-ACYLTRANSFERASE, MITOCHONDRIAL-RELATED"/>
    <property type="match status" value="1"/>
</dbReference>
<dbReference type="Pfam" id="PF13720">
    <property type="entry name" value="Acetyltransf_11"/>
    <property type="match status" value="1"/>
</dbReference>
<dbReference type="Pfam" id="PF00132">
    <property type="entry name" value="Hexapep"/>
    <property type="match status" value="2"/>
</dbReference>
<dbReference type="PIRSF" id="PIRSF000456">
    <property type="entry name" value="UDP-GlcNAc_acltr"/>
    <property type="match status" value="1"/>
</dbReference>
<dbReference type="SUPFAM" id="SSF51161">
    <property type="entry name" value="Trimeric LpxA-like enzymes"/>
    <property type="match status" value="1"/>
</dbReference>
<protein>
    <recommendedName>
        <fullName evidence="1">Acyl-[acyl-carrier-protein]--UDP-N-acetylglucosamine O-acyltransferase</fullName>
        <shortName evidence="1">UDP-N-acetylglucosamine acyltransferase</shortName>
        <ecNumber evidence="1">2.3.1.129</ecNumber>
    </recommendedName>
</protein>
<gene>
    <name evidence="1" type="primary">lpxA</name>
    <name type="ordered locus">FN0595</name>
</gene>
<organism>
    <name type="scientific">Fusobacterium nucleatum subsp. nucleatum (strain ATCC 25586 / DSM 15643 / BCRC 10681 / CIP 101130 / JCM 8532 / KCTC 2640 / LMG 13131 / VPI 4355)</name>
    <dbReference type="NCBI Taxonomy" id="190304"/>
    <lineage>
        <taxon>Bacteria</taxon>
        <taxon>Fusobacteriati</taxon>
        <taxon>Fusobacteriota</taxon>
        <taxon>Fusobacteriia</taxon>
        <taxon>Fusobacteriales</taxon>
        <taxon>Fusobacteriaceae</taxon>
        <taxon>Fusobacterium</taxon>
    </lineage>
</organism>
<feature type="chain" id="PRO_0000188049" description="Acyl-[acyl-carrier-protein]--UDP-N-acetylglucosamine O-acyltransferase">
    <location>
        <begin position="1"/>
        <end position="257"/>
    </location>
</feature>
<sequence>MVDIHSTAIIEDGAIIEDGVKIGPYCIVGKDVVIKKGTVLQSHVVVEGITEIGENNTIYSFVSIGKDNQDLKYKGEPTKTIIGNNNSIREFVTIHRGTDDRWETRIGNGNLIMAYVHVAHDVIIGDDCIFSNNVTLAGHVVIDSHAIIGGLTPIHQFTRIGSYSMIGGASAVSQDVCPFVLAAGNTVVLRGLNIVGLRRRGFSDEEISNLKKAYRILFRQGLQLKDALEELEKDFSEDKNVKYLVDFIKSSDRGIAR</sequence>
<reference key="1">
    <citation type="journal article" date="2002" name="J. Bacteriol.">
        <title>Genome sequence and analysis of the oral bacterium Fusobacterium nucleatum strain ATCC 25586.</title>
        <authorList>
            <person name="Kapatral V."/>
            <person name="Anderson I."/>
            <person name="Ivanova N."/>
            <person name="Reznik G."/>
            <person name="Los T."/>
            <person name="Lykidis A."/>
            <person name="Bhattacharyya A."/>
            <person name="Bartman A."/>
            <person name="Gardner W."/>
            <person name="Grechkin G."/>
            <person name="Zhu L."/>
            <person name="Vasieva O."/>
            <person name="Chu L."/>
            <person name="Kogan Y."/>
            <person name="Chaga O."/>
            <person name="Goltsman E."/>
            <person name="Bernal A."/>
            <person name="Larsen N."/>
            <person name="D'Souza M."/>
            <person name="Walunas T."/>
            <person name="Pusch G."/>
            <person name="Haselkorn R."/>
            <person name="Fonstein M."/>
            <person name="Kyrpides N.C."/>
            <person name="Overbeek R."/>
        </authorList>
    </citation>
    <scope>NUCLEOTIDE SEQUENCE [LARGE SCALE GENOMIC DNA]</scope>
    <source>
        <strain>ATCC 25586 / DSM 15643 / BCRC 10681 / CIP 101130 / JCM 8532 / KCTC 2640 / LMG 13131 / VPI 4355</strain>
    </source>
</reference>